<sequence>MISKPDKNKLRQKRHTRVRGKISGTTETPRLNVFRSNTNIYAQVIDDVTGTTLASASSLKLTGTKTEQAAEVGKLVAEAAKAKGVEEVVFDRGGYLYHGRVAALATAAREAGLKF</sequence>
<dbReference type="EMBL" id="AM406671">
    <property type="protein sequence ID" value="CAL98928.1"/>
    <property type="molecule type" value="Genomic_DNA"/>
</dbReference>
<dbReference type="RefSeq" id="WP_011677153.1">
    <property type="nucleotide sequence ID" value="NC_009004.1"/>
</dbReference>
<dbReference type="PDB" id="5MYJ">
    <property type="method" value="EM"/>
    <property type="resolution" value="5.60 A"/>
    <property type="chains" value="BR=1-115"/>
</dbReference>
<dbReference type="PDBsum" id="5MYJ"/>
<dbReference type="EMDB" id="EMD-3581"/>
<dbReference type="SMR" id="A2RNN7"/>
<dbReference type="STRING" id="416870.llmg_2365"/>
<dbReference type="GeneID" id="61110410"/>
<dbReference type="KEGG" id="llm:llmg_2365"/>
<dbReference type="eggNOG" id="COG0256">
    <property type="taxonomic scope" value="Bacteria"/>
</dbReference>
<dbReference type="HOGENOM" id="CLU_098841_0_1_9"/>
<dbReference type="OrthoDB" id="9810939at2"/>
<dbReference type="PhylomeDB" id="A2RNN7"/>
<dbReference type="Proteomes" id="UP000000364">
    <property type="component" value="Chromosome"/>
</dbReference>
<dbReference type="GO" id="GO:0022625">
    <property type="term" value="C:cytosolic large ribosomal subunit"/>
    <property type="evidence" value="ECO:0007669"/>
    <property type="project" value="TreeGrafter"/>
</dbReference>
<dbReference type="GO" id="GO:0008097">
    <property type="term" value="F:5S rRNA binding"/>
    <property type="evidence" value="ECO:0007669"/>
    <property type="project" value="TreeGrafter"/>
</dbReference>
<dbReference type="GO" id="GO:0003735">
    <property type="term" value="F:structural constituent of ribosome"/>
    <property type="evidence" value="ECO:0007669"/>
    <property type="project" value="InterPro"/>
</dbReference>
<dbReference type="GO" id="GO:0006412">
    <property type="term" value="P:translation"/>
    <property type="evidence" value="ECO:0007669"/>
    <property type="project" value="UniProtKB-UniRule"/>
</dbReference>
<dbReference type="CDD" id="cd00432">
    <property type="entry name" value="Ribosomal_L18_L5e"/>
    <property type="match status" value="1"/>
</dbReference>
<dbReference type="FunFam" id="3.30.420.100:FF:000001">
    <property type="entry name" value="50S ribosomal protein L18"/>
    <property type="match status" value="1"/>
</dbReference>
<dbReference type="Gene3D" id="3.30.420.100">
    <property type="match status" value="1"/>
</dbReference>
<dbReference type="HAMAP" id="MF_01337_B">
    <property type="entry name" value="Ribosomal_uL18_B"/>
    <property type="match status" value="1"/>
</dbReference>
<dbReference type="InterPro" id="IPR004389">
    <property type="entry name" value="Ribosomal_uL18_bac-type"/>
</dbReference>
<dbReference type="InterPro" id="IPR005484">
    <property type="entry name" value="Ribosomal_uL18_bac/euk"/>
</dbReference>
<dbReference type="NCBIfam" id="TIGR00060">
    <property type="entry name" value="L18_bact"/>
    <property type="match status" value="1"/>
</dbReference>
<dbReference type="PANTHER" id="PTHR12899">
    <property type="entry name" value="39S RIBOSOMAL PROTEIN L18, MITOCHONDRIAL"/>
    <property type="match status" value="1"/>
</dbReference>
<dbReference type="PANTHER" id="PTHR12899:SF3">
    <property type="entry name" value="LARGE RIBOSOMAL SUBUNIT PROTEIN UL18M"/>
    <property type="match status" value="1"/>
</dbReference>
<dbReference type="Pfam" id="PF00861">
    <property type="entry name" value="Ribosomal_L18p"/>
    <property type="match status" value="1"/>
</dbReference>
<dbReference type="SUPFAM" id="SSF53137">
    <property type="entry name" value="Translational machinery components"/>
    <property type="match status" value="1"/>
</dbReference>
<organism>
    <name type="scientific">Lactococcus lactis subsp. cremoris (strain MG1363)</name>
    <dbReference type="NCBI Taxonomy" id="416870"/>
    <lineage>
        <taxon>Bacteria</taxon>
        <taxon>Bacillati</taxon>
        <taxon>Bacillota</taxon>
        <taxon>Bacilli</taxon>
        <taxon>Lactobacillales</taxon>
        <taxon>Streptococcaceae</taxon>
        <taxon>Lactococcus</taxon>
        <taxon>Lactococcus cremoris subsp. cremoris</taxon>
    </lineage>
</organism>
<name>RL18_LACLM</name>
<gene>
    <name evidence="1" type="primary">rplR</name>
    <name type="ordered locus">llmg_2365</name>
</gene>
<feature type="chain" id="PRO_1000053046" description="Large ribosomal subunit protein uL18">
    <location>
        <begin position="1"/>
        <end position="115"/>
    </location>
</feature>
<feature type="region of interest" description="Disordered" evidence="2">
    <location>
        <begin position="1"/>
        <end position="24"/>
    </location>
</feature>
<feature type="compositionally biased region" description="Basic residues" evidence="2">
    <location>
        <begin position="10"/>
        <end position="20"/>
    </location>
</feature>
<protein>
    <recommendedName>
        <fullName evidence="1">Large ribosomal subunit protein uL18</fullName>
    </recommendedName>
    <alternativeName>
        <fullName evidence="3">50S ribosomal protein L18</fullName>
    </alternativeName>
</protein>
<keyword id="KW-0002">3D-structure</keyword>
<keyword id="KW-0687">Ribonucleoprotein</keyword>
<keyword id="KW-0689">Ribosomal protein</keyword>
<keyword id="KW-0694">RNA-binding</keyword>
<keyword id="KW-0699">rRNA-binding</keyword>
<accession>A2RNN7</accession>
<comment type="function">
    <text evidence="1">This is one of the proteins that bind and probably mediate the attachment of the 5S RNA into the large ribosomal subunit, where it forms part of the central protuberance.</text>
</comment>
<comment type="subunit">
    <text evidence="1">Part of the 50S ribosomal subunit; part of the 5S rRNA/L5/L18/L25 subcomplex. Contacts the 5S and 23S rRNAs.</text>
</comment>
<comment type="similarity">
    <text evidence="1">Belongs to the universal ribosomal protein uL18 family.</text>
</comment>
<proteinExistence type="evidence at protein level"/>
<reference key="1">
    <citation type="journal article" date="2007" name="J. Bacteriol.">
        <title>The complete genome sequence of the lactic acid bacterial paradigm Lactococcus lactis subsp. cremoris MG1363.</title>
        <authorList>
            <person name="Wegmann U."/>
            <person name="O'Connell-Motherway M."/>
            <person name="Zomer A."/>
            <person name="Buist G."/>
            <person name="Shearman C."/>
            <person name="Canchaya C."/>
            <person name="Ventura M."/>
            <person name="Goesmann A."/>
            <person name="Gasson M.J."/>
            <person name="Kuipers O.P."/>
            <person name="van Sinderen D."/>
            <person name="Kok J."/>
        </authorList>
    </citation>
    <scope>NUCLEOTIDE SEQUENCE [LARGE SCALE GENOMIC DNA]</scope>
    <source>
        <strain>MG1363</strain>
    </source>
</reference>
<evidence type="ECO:0000255" key="1">
    <source>
        <dbReference type="HAMAP-Rule" id="MF_01337"/>
    </source>
</evidence>
<evidence type="ECO:0000256" key="2">
    <source>
        <dbReference type="SAM" id="MobiDB-lite"/>
    </source>
</evidence>
<evidence type="ECO:0000305" key="3"/>